<evidence type="ECO:0000269" key="1">
    <source>
    </source>
</evidence>
<evidence type="ECO:0000303" key="2">
    <source>
    </source>
</evidence>
<evidence type="ECO:0000305" key="3"/>
<evidence type="ECO:0007744" key="4">
    <source>
    </source>
</evidence>
<evidence type="ECO:0007744" key="5">
    <source>
    </source>
</evidence>
<evidence type="ECO:0007829" key="6">
    <source>
        <dbReference type="PDB" id="2JBH"/>
    </source>
</evidence>
<name>PRDC1_HUMAN</name>
<proteinExistence type="evidence at protein level"/>
<reference key="1">
    <citation type="submission" date="2000-01" db="EMBL/GenBank/DDBJ databases">
        <title>A novel gene expressed in human liver cancer tissue.</title>
        <authorList>
            <person name="Li Y."/>
            <person name="Wu T."/>
            <person name="Xu S."/>
            <person name="Ren S."/>
            <person name="Chen Z."/>
            <person name="Han Z."/>
        </authorList>
    </citation>
    <scope>NUCLEOTIDE SEQUENCE [LARGE SCALE MRNA] (ISOFORM 1)</scope>
    <source>
        <tissue>Liver cancer</tissue>
    </source>
</reference>
<reference key="2">
    <citation type="journal article" date="2004" name="Nat. Genet.">
        <title>Complete sequencing and characterization of 21,243 full-length human cDNAs.</title>
        <authorList>
            <person name="Ota T."/>
            <person name="Suzuki Y."/>
            <person name="Nishikawa T."/>
            <person name="Otsuki T."/>
            <person name="Sugiyama T."/>
            <person name="Irie R."/>
            <person name="Wakamatsu A."/>
            <person name="Hayashi K."/>
            <person name="Sato H."/>
            <person name="Nagai K."/>
            <person name="Kimura K."/>
            <person name="Makita H."/>
            <person name="Sekine M."/>
            <person name="Obayashi M."/>
            <person name="Nishi T."/>
            <person name="Shibahara T."/>
            <person name="Tanaka T."/>
            <person name="Ishii S."/>
            <person name="Yamamoto J."/>
            <person name="Saito K."/>
            <person name="Kawai Y."/>
            <person name="Isono Y."/>
            <person name="Nakamura Y."/>
            <person name="Nagahari K."/>
            <person name="Murakami K."/>
            <person name="Yasuda T."/>
            <person name="Iwayanagi T."/>
            <person name="Wagatsuma M."/>
            <person name="Shiratori A."/>
            <person name="Sudo H."/>
            <person name="Hosoiri T."/>
            <person name="Kaku Y."/>
            <person name="Kodaira H."/>
            <person name="Kondo H."/>
            <person name="Sugawara M."/>
            <person name="Takahashi M."/>
            <person name="Kanda K."/>
            <person name="Yokoi T."/>
            <person name="Furuya T."/>
            <person name="Kikkawa E."/>
            <person name="Omura Y."/>
            <person name="Abe K."/>
            <person name="Kamihara K."/>
            <person name="Katsuta N."/>
            <person name="Sato K."/>
            <person name="Tanikawa M."/>
            <person name="Yamazaki M."/>
            <person name="Ninomiya K."/>
            <person name="Ishibashi T."/>
            <person name="Yamashita H."/>
            <person name="Murakawa K."/>
            <person name="Fujimori K."/>
            <person name="Tanai H."/>
            <person name="Kimata M."/>
            <person name="Watanabe M."/>
            <person name="Hiraoka S."/>
            <person name="Chiba Y."/>
            <person name="Ishida S."/>
            <person name="Ono Y."/>
            <person name="Takiguchi S."/>
            <person name="Watanabe S."/>
            <person name="Yosida M."/>
            <person name="Hotuta T."/>
            <person name="Kusano J."/>
            <person name="Kanehori K."/>
            <person name="Takahashi-Fujii A."/>
            <person name="Hara H."/>
            <person name="Tanase T.-O."/>
            <person name="Nomura Y."/>
            <person name="Togiya S."/>
            <person name="Komai F."/>
            <person name="Hara R."/>
            <person name="Takeuchi K."/>
            <person name="Arita M."/>
            <person name="Imose N."/>
            <person name="Musashino K."/>
            <person name="Yuuki H."/>
            <person name="Oshima A."/>
            <person name="Sasaki N."/>
            <person name="Aotsuka S."/>
            <person name="Yoshikawa Y."/>
            <person name="Matsunawa H."/>
            <person name="Ichihara T."/>
            <person name="Shiohata N."/>
            <person name="Sano S."/>
            <person name="Moriya S."/>
            <person name="Momiyama H."/>
            <person name="Satoh N."/>
            <person name="Takami S."/>
            <person name="Terashima Y."/>
            <person name="Suzuki O."/>
            <person name="Nakagawa S."/>
            <person name="Senoh A."/>
            <person name="Mizoguchi H."/>
            <person name="Goto Y."/>
            <person name="Shimizu F."/>
            <person name="Wakebe H."/>
            <person name="Hishigaki H."/>
            <person name="Watanabe T."/>
            <person name="Sugiyama A."/>
            <person name="Takemoto M."/>
            <person name="Kawakami B."/>
            <person name="Yamazaki M."/>
            <person name="Watanabe K."/>
            <person name="Kumagai A."/>
            <person name="Itakura S."/>
            <person name="Fukuzumi Y."/>
            <person name="Fujimori Y."/>
            <person name="Komiyama M."/>
            <person name="Tashiro H."/>
            <person name="Tanigami A."/>
            <person name="Fujiwara T."/>
            <person name="Ono T."/>
            <person name="Yamada K."/>
            <person name="Fujii Y."/>
            <person name="Ozaki K."/>
            <person name="Hirao M."/>
            <person name="Ohmori Y."/>
            <person name="Kawabata A."/>
            <person name="Hikiji T."/>
            <person name="Kobatake N."/>
            <person name="Inagaki H."/>
            <person name="Ikema Y."/>
            <person name="Okamoto S."/>
            <person name="Okitani R."/>
            <person name="Kawakami T."/>
            <person name="Noguchi S."/>
            <person name="Itoh T."/>
            <person name="Shigeta K."/>
            <person name="Senba T."/>
            <person name="Matsumura K."/>
            <person name="Nakajima Y."/>
            <person name="Mizuno T."/>
            <person name="Morinaga M."/>
            <person name="Sasaki M."/>
            <person name="Togashi T."/>
            <person name="Oyama M."/>
            <person name="Hata H."/>
            <person name="Watanabe M."/>
            <person name="Komatsu T."/>
            <person name="Mizushima-Sugano J."/>
            <person name="Satoh T."/>
            <person name="Shirai Y."/>
            <person name="Takahashi Y."/>
            <person name="Nakagawa K."/>
            <person name="Okumura K."/>
            <person name="Nagase T."/>
            <person name="Nomura N."/>
            <person name="Kikuchi H."/>
            <person name="Masuho Y."/>
            <person name="Yamashita R."/>
            <person name="Nakai K."/>
            <person name="Yada T."/>
            <person name="Nakamura Y."/>
            <person name="Ohara O."/>
            <person name="Isogai T."/>
            <person name="Sugano S."/>
        </authorList>
    </citation>
    <scope>NUCLEOTIDE SEQUENCE [LARGE SCALE MRNA] (ISOFORMS 1 AND 2)</scope>
    <source>
        <tissue>Brain cortex</tissue>
        <tissue>Embryo</tissue>
    </source>
</reference>
<reference key="3">
    <citation type="submission" date="2005-03" db="EMBL/GenBank/DDBJ databases">
        <authorList>
            <person name="Totoki Y."/>
            <person name="Toyoda A."/>
            <person name="Takeda T."/>
            <person name="Sakaki Y."/>
            <person name="Tanaka A."/>
            <person name="Yokoyama S."/>
            <person name="Ohara O."/>
            <person name="Nagase T."/>
            <person name="Kikuno R.F."/>
        </authorList>
    </citation>
    <scope>NUCLEOTIDE SEQUENCE [LARGE SCALE MRNA] (ISOFORM 1)</scope>
    <source>
        <tissue>Brain</tissue>
    </source>
</reference>
<reference key="4">
    <citation type="journal article" date="2004" name="Nature">
        <title>The DNA sequence and comparative analysis of human chromosome 10.</title>
        <authorList>
            <person name="Deloukas P."/>
            <person name="Earthrowl M.E."/>
            <person name="Grafham D.V."/>
            <person name="Rubenfield M."/>
            <person name="French L."/>
            <person name="Steward C.A."/>
            <person name="Sims S.K."/>
            <person name="Jones M.C."/>
            <person name="Searle S."/>
            <person name="Scott C."/>
            <person name="Howe K."/>
            <person name="Hunt S.E."/>
            <person name="Andrews T.D."/>
            <person name="Gilbert J.G.R."/>
            <person name="Swarbreck D."/>
            <person name="Ashurst J.L."/>
            <person name="Taylor A."/>
            <person name="Battles J."/>
            <person name="Bird C.P."/>
            <person name="Ainscough R."/>
            <person name="Almeida J.P."/>
            <person name="Ashwell R.I.S."/>
            <person name="Ambrose K.D."/>
            <person name="Babbage A.K."/>
            <person name="Bagguley C.L."/>
            <person name="Bailey J."/>
            <person name="Banerjee R."/>
            <person name="Bates K."/>
            <person name="Beasley H."/>
            <person name="Bray-Allen S."/>
            <person name="Brown A.J."/>
            <person name="Brown J.Y."/>
            <person name="Burford D.C."/>
            <person name="Burrill W."/>
            <person name="Burton J."/>
            <person name="Cahill P."/>
            <person name="Camire D."/>
            <person name="Carter N.P."/>
            <person name="Chapman J.C."/>
            <person name="Clark S.Y."/>
            <person name="Clarke G."/>
            <person name="Clee C.M."/>
            <person name="Clegg S."/>
            <person name="Corby N."/>
            <person name="Coulson A."/>
            <person name="Dhami P."/>
            <person name="Dutta I."/>
            <person name="Dunn M."/>
            <person name="Faulkner L."/>
            <person name="Frankish A."/>
            <person name="Frankland J.A."/>
            <person name="Garner P."/>
            <person name="Garnett J."/>
            <person name="Gribble S."/>
            <person name="Griffiths C."/>
            <person name="Grocock R."/>
            <person name="Gustafson E."/>
            <person name="Hammond S."/>
            <person name="Harley J.L."/>
            <person name="Hart E."/>
            <person name="Heath P.D."/>
            <person name="Ho T.P."/>
            <person name="Hopkins B."/>
            <person name="Horne J."/>
            <person name="Howden P.J."/>
            <person name="Huckle E."/>
            <person name="Hynds C."/>
            <person name="Johnson C."/>
            <person name="Johnson D."/>
            <person name="Kana A."/>
            <person name="Kay M."/>
            <person name="Kimberley A.M."/>
            <person name="Kershaw J.K."/>
            <person name="Kokkinaki M."/>
            <person name="Laird G.K."/>
            <person name="Lawlor S."/>
            <person name="Lee H.M."/>
            <person name="Leongamornlert D.A."/>
            <person name="Laird G."/>
            <person name="Lloyd C."/>
            <person name="Lloyd D.M."/>
            <person name="Loveland J."/>
            <person name="Lovell J."/>
            <person name="McLaren S."/>
            <person name="McLay K.E."/>
            <person name="McMurray A."/>
            <person name="Mashreghi-Mohammadi M."/>
            <person name="Matthews L."/>
            <person name="Milne S."/>
            <person name="Nickerson T."/>
            <person name="Nguyen M."/>
            <person name="Overton-Larty E."/>
            <person name="Palmer S.A."/>
            <person name="Pearce A.V."/>
            <person name="Peck A.I."/>
            <person name="Pelan S."/>
            <person name="Phillimore B."/>
            <person name="Porter K."/>
            <person name="Rice C.M."/>
            <person name="Rogosin A."/>
            <person name="Ross M.T."/>
            <person name="Sarafidou T."/>
            <person name="Sehra H.K."/>
            <person name="Shownkeen R."/>
            <person name="Skuce C.D."/>
            <person name="Smith M."/>
            <person name="Standring L."/>
            <person name="Sycamore N."/>
            <person name="Tester J."/>
            <person name="Thorpe A."/>
            <person name="Torcasso W."/>
            <person name="Tracey A."/>
            <person name="Tromans A."/>
            <person name="Tsolas J."/>
            <person name="Wall M."/>
            <person name="Walsh J."/>
            <person name="Wang H."/>
            <person name="Weinstock K."/>
            <person name="West A.P."/>
            <person name="Willey D.L."/>
            <person name="Whitehead S.L."/>
            <person name="Wilming L."/>
            <person name="Wray P.W."/>
            <person name="Young L."/>
            <person name="Chen Y."/>
            <person name="Lovering R.C."/>
            <person name="Moschonas N.K."/>
            <person name="Siebert R."/>
            <person name="Fechtel K."/>
            <person name="Bentley D."/>
            <person name="Durbin R.M."/>
            <person name="Hubbard T."/>
            <person name="Doucette-Stamm L."/>
            <person name="Beck S."/>
            <person name="Smith D.R."/>
            <person name="Rogers J."/>
        </authorList>
    </citation>
    <scope>NUCLEOTIDE SEQUENCE [LARGE SCALE GENOMIC DNA]</scope>
    <scope>ALTERNATIVE SPLICING (ISOFORMS 2 AND 3)</scope>
</reference>
<reference key="5">
    <citation type="submission" date="2005-09" db="EMBL/GenBank/DDBJ databases">
        <authorList>
            <person name="Mural R.J."/>
            <person name="Istrail S."/>
            <person name="Sutton G.G."/>
            <person name="Florea L."/>
            <person name="Halpern A.L."/>
            <person name="Mobarry C.M."/>
            <person name="Lippert R."/>
            <person name="Walenz B."/>
            <person name="Shatkay H."/>
            <person name="Dew I."/>
            <person name="Miller J.R."/>
            <person name="Flanigan M.J."/>
            <person name="Edwards N.J."/>
            <person name="Bolanos R."/>
            <person name="Fasulo D."/>
            <person name="Halldorsson B.V."/>
            <person name="Hannenhalli S."/>
            <person name="Turner R."/>
            <person name="Yooseph S."/>
            <person name="Lu F."/>
            <person name="Nusskern D.R."/>
            <person name="Shue B.C."/>
            <person name="Zheng X.H."/>
            <person name="Zhong F."/>
            <person name="Delcher A.L."/>
            <person name="Huson D.H."/>
            <person name="Kravitz S.A."/>
            <person name="Mouchard L."/>
            <person name="Reinert K."/>
            <person name="Remington K.A."/>
            <person name="Clark A.G."/>
            <person name="Waterman M.S."/>
            <person name="Eichler E.E."/>
            <person name="Adams M.D."/>
            <person name="Hunkapiller M.W."/>
            <person name="Myers E.W."/>
            <person name="Venter J.C."/>
        </authorList>
    </citation>
    <scope>NUCLEOTIDE SEQUENCE [LARGE SCALE GENOMIC DNA]</scope>
</reference>
<reference key="6">
    <citation type="journal article" date="2004" name="Genome Res.">
        <title>The status, quality, and expansion of the NIH full-length cDNA project: the Mammalian Gene Collection (MGC).</title>
        <authorList>
            <consortium name="The MGC Project Team"/>
        </authorList>
    </citation>
    <scope>NUCLEOTIDE SEQUENCE [LARGE SCALE MRNA] (ISOFORM 1)</scope>
    <source>
        <tissue>Eye</tissue>
    </source>
</reference>
<reference key="7">
    <citation type="journal article" date="2009" name="Anal. Chem.">
        <title>Lys-N and trypsin cover complementary parts of the phosphoproteome in a refined SCX-based approach.</title>
        <authorList>
            <person name="Gauci S."/>
            <person name="Helbig A.O."/>
            <person name="Slijper M."/>
            <person name="Krijgsveld J."/>
            <person name="Heck A.J."/>
            <person name="Mohammed S."/>
        </authorList>
    </citation>
    <scope>ACETYLATION [LARGE SCALE ANALYSIS] AT ALA-2</scope>
    <scope>CLEAVAGE OF INITIATOR METHIONINE [LARGE SCALE ANALYSIS]</scope>
    <scope>IDENTIFICATION BY MASS SPECTROMETRY [LARGE SCALE ANALYSIS]</scope>
</reference>
<reference key="8">
    <citation type="journal article" date="2012" name="Proc. Natl. Acad. Sci. U.S.A.">
        <title>N-terminal acetylome analyses and functional insights of the N-terminal acetyltransferase NatB.</title>
        <authorList>
            <person name="Van Damme P."/>
            <person name="Lasa M."/>
            <person name="Polevoda B."/>
            <person name="Gazquez C."/>
            <person name="Elosegui-Artola A."/>
            <person name="Kim D.S."/>
            <person name="De Juan-Pardo E."/>
            <person name="Demeyer K."/>
            <person name="Hole K."/>
            <person name="Larrea E."/>
            <person name="Timmerman E."/>
            <person name="Prieto J."/>
            <person name="Arnesen T."/>
            <person name="Sherman F."/>
            <person name="Gevaert K."/>
            <person name="Aldabe R."/>
        </authorList>
    </citation>
    <scope>ACETYLATION [LARGE SCALE ANALYSIS] AT ALA-2</scope>
    <scope>CLEAVAGE OF INITIATOR METHIONINE [LARGE SCALE ANALYSIS]</scope>
    <scope>IDENTIFICATION BY MASS SPECTROMETRY [LARGE SCALE ANALYSIS]</scope>
</reference>
<reference key="9">
    <citation type="journal article" date="2010" name="FEBS J.">
        <title>Structural and functional studies of the human phosphoribosyltransferase domain containing protein 1.</title>
        <authorList>
            <person name="Welin M."/>
            <person name="Egeblad L."/>
            <person name="Johansson A."/>
            <person name="Stenmark P."/>
            <person name="Wang L."/>
            <person name="Flodin S."/>
            <person name="Nyman T."/>
            <person name="Tresaugues L."/>
            <person name="Kotenyova T."/>
            <person name="Johansson I."/>
            <person name="Eriksson S."/>
            <person name="Eklund H."/>
            <person name="Nordlund P."/>
        </authorList>
    </citation>
    <scope>X-RAY CRYSTALLOGRAPHY (1.7 ANGSTROMS) IN COMPLEX WITH GMP; PHOSPHATE AND CALCIUM IONS</scope>
    <scope>SUBUNIT</scope>
    <scope>ABSENCE OF PHOSPHORIBOSYLTRANSFERASE ACTIVITY</scope>
</reference>
<gene>
    <name type="primary">PRTFDC1</name>
    <name type="synonym">HHGP</name>
</gene>
<comment type="function">
    <text>Has low, barely detectable phosphoribosyltransferase activity (in vitro). Binds GMP, IMP and alpha-D-5-phosphoribosyl 1-pyrophosphate (PRPP). Is not expected to contribute to purine metabolism or GMP salvage.</text>
</comment>
<comment type="subunit">
    <text evidence="1">Homodimer.</text>
</comment>
<comment type="interaction">
    <interactant intactId="EBI-739759">
        <id>Q9NRG1</id>
    </interactant>
    <interactant intactId="EBI-958255">
        <id>Q96F85</id>
        <label>CNRIP1</label>
    </interactant>
    <organismsDiffer>false</organismsDiffer>
    <experiments>3</experiments>
</comment>
<comment type="interaction">
    <interactant intactId="EBI-739759">
        <id>Q9NRG1</id>
    </interactant>
    <interactant intactId="EBI-747840">
        <id>Q96G04</id>
        <label>EEF2KMT</label>
    </interactant>
    <organismsDiffer>false</organismsDiffer>
    <experiments>8</experiments>
</comment>
<comment type="interaction">
    <interactant intactId="EBI-739759">
        <id>Q9NRG1</id>
    </interactant>
    <interactant intactId="EBI-6255981">
        <id>Q7L775</id>
        <label>EPM2AIP1</label>
    </interactant>
    <organismsDiffer>false</organismsDiffer>
    <experiments>6</experiments>
</comment>
<comment type="interaction">
    <interactant intactId="EBI-739759">
        <id>Q9NRG1</id>
    </interactant>
    <interactant intactId="EBI-11526128">
        <id>Q8NFF5-2</id>
        <label>FLAD1</label>
    </interactant>
    <organismsDiffer>false</organismsDiffer>
    <experiments>3</experiments>
</comment>
<comment type="interaction">
    <interactant intactId="EBI-739759">
        <id>Q9NRG1</id>
    </interactant>
    <interactant intactId="EBI-749356">
        <id>P46926</id>
        <label>GNPDA1</label>
    </interactant>
    <organismsDiffer>false</organismsDiffer>
    <experiments>3</experiments>
</comment>
<comment type="interaction">
    <interactant intactId="EBI-739759">
        <id>Q9NRG1</id>
    </interactant>
    <interactant intactId="EBI-748210">
        <id>P00492</id>
        <label>HPRT1</label>
    </interactant>
    <organismsDiffer>false</organismsDiffer>
    <experiments>12</experiments>
</comment>
<comment type="interaction">
    <interactant intactId="EBI-739759">
        <id>Q9NRG1</id>
    </interactant>
    <interactant intactId="EBI-10240775">
        <id>Q3B8N2</id>
        <label>LGALS9B</label>
    </interactant>
    <organismsDiffer>false</organismsDiffer>
    <experiments>3</experiments>
</comment>
<comment type="interaction">
    <interactant intactId="EBI-739759">
        <id>Q9NRG1</id>
    </interactant>
    <interactant intactId="EBI-739832">
        <id>Q8TBB1</id>
        <label>LNX1</label>
    </interactant>
    <organismsDiffer>false</organismsDiffer>
    <experiments>3</experiments>
</comment>
<comment type="interaction">
    <interactant intactId="EBI-739759">
        <id>Q9NRG1</id>
    </interactant>
    <interactant intactId="EBI-749378">
        <id>Q9BTE3</id>
        <label>MCMBP</label>
    </interactant>
    <organismsDiffer>false</organismsDiffer>
    <experiments>3</experiments>
</comment>
<comment type="interaction">
    <interactant intactId="EBI-739759">
        <id>Q9NRG1</id>
    </interactant>
    <interactant intactId="EBI-9384556">
        <id>Q9BTE3-2</id>
        <label>MCMBP</label>
    </interactant>
    <organismsDiffer>false</organismsDiffer>
    <experiments>6</experiments>
</comment>
<comment type="interaction">
    <interactant intactId="EBI-739759">
        <id>Q9NRG1</id>
    </interactant>
    <interactant intactId="EBI-741158">
        <id>Q96HA8</id>
        <label>NTAQ1</label>
    </interactant>
    <organismsDiffer>false</organismsDiffer>
    <experiments>3</experiments>
</comment>
<comment type="interaction">
    <interactant intactId="EBI-739759">
        <id>Q9NRG1</id>
    </interactant>
    <interactant intactId="EBI-22345187">
        <id>A0A0B4J2F2</id>
        <label>SIK1B</label>
    </interactant>
    <organismsDiffer>false</organismsDiffer>
    <experiments>3</experiments>
</comment>
<comment type="interaction">
    <interactant intactId="EBI-739759">
        <id>Q9NRG1</id>
    </interactant>
    <interactant intactId="EBI-742688">
        <id>Q9NZD8</id>
        <label>SPG21</label>
    </interactant>
    <organismsDiffer>false</organismsDiffer>
    <experiments>3</experiments>
</comment>
<comment type="interaction">
    <interactant intactId="EBI-739759">
        <id>Q9NRG1</id>
    </interactant>
    <interactant intactId="EBI-749995">
        <id>P56279</id>
        <label>TCL1A</label>
    </interactant>
    <organismsDiffer>false</organismsDiffer>
    <experiments>6</experiments>
</comment>
<comment type="interaction">
    <interactant intactId="EBI-739759">
        <id>Q9NRG1</id>
    </interactant>
    <interactant intactId="EBI-12246480">
        <id>O00534</id>
        <label>VWA5A</label>
    </interactant>
    <organismsDiffer>false</organismsDiffer>
    <experiments>3</experiments>
</comment>
<comment type="alternative products">
    <event type="alternative splicing"/>
    <isoform>
        <id>Q9NRG1-1</id>
        <name>1</name>
        <sequence type="displayed"/>
    </isoform>
    <isoform>
        <id>Q9NRG1-2</id>
        <name>2</name>
        <sequence type="described" ref="VSP_031180"/>
    </isoform>
    <isoform>
        <id>Q9NRG1-3</id>
        <name>3</name>
        <sequence type="described" ref="VSP_031179"/>
    </isoform>
</comment>
<comment type="similarity">
    <text evidence="3">Belongs to the purine/pyrimidine phosphoribosyltransferase family.</text>
</comment>
<comment type="caution">
    <text evidence="3">Lacks the conserved active site Asp and has no significant phosphoribosyltransferase activity.</text>
</comment>
<comment type="sequence caution" evidence="3">
    <conflict type="erroneous initiation">
        <sequence resource="EMBL-CDS" id="BAD93029"/>
    </conflict>
</comment>
<dbReference type="EMBL" id="AF226056">
    <property type="protein sequence ID" value="AAF86956.1"/>
    <property type="molecule type" value="mRNA"/>
</dbReference>
<dbReference type="EMBL" id="AK021950">
    <property type="protein sequence ID" value="BAB13944.1"/>
    <property type="molecule type" value="mRNA"/>
</dbReference>
<dbReference type="EMBL" id="AB209792">
    <property type="protein sequence ID" value="BAD93029.1"/>
    <property type="status" value="ALT_INIT"/>
    <property type="molecule type" value="mRNA"/>
</dbReference>
<dbReference type="EMBL" id="AK222674">
    <property type="protein sequence ID" value="BAD96394.1"/>
    <property type="molecule type" value="mRNA"/>
</dbReference>
<dbReference type="EMBL" id="AK294130">
    <property type="protein sequence ID" value="BAH11679.1"/>
    <property type="molecule type" value="mRNA"/>
</dbReference>
<dbReference type="EMBL" id="AL157385">
    <property type="status" value="NOT_ANNOTATED_CDS"/>
    <property type="molecule type" value="Genomic_DNA"/>
</dbReference>
<dbReference type="EMBL" id="AL512598">
    <property type="status" value="NOT_ANNOTATED_CDS"/>
    <property type="molecule type" value="Genomic_DNA"/>
</dbReference>
<dbReference type="EMBL" id="CH471072">
    <property type="protein sequence ID" value="EAW86120.1"/>
    <property type="molecule type" value="Genomic_DNA"/>
</dbReference>
<dbReference type="EMBL" id="BC008662">
    <property type="protein sequence ID" value="AAH08662.1"/>
    <property type="molecule type" value="mRNA"/>
</dbReference>
<dbReference type="CCDS" id="CCDS60506.1">
    <molecule id="Q9NRG1-2"/>
</dbReference>
<dbReference type="CCDS" id="CCDS7145.1">
    <molecule id="Q9NRG1-1"/>
</dbReference>
<dbReference type="RefSeq" id="NP_001269715.1">
    <molecule id="Q9NRG1-2"/>
    <property type="nucleotide sequence ID" value="NM_001282786.2"/>
</dbReference>
<dbReference type="RefSeq" id="NP_064585.1">
    <molecule id="Q9NRG1-1"/>
    <property type="nucleotide sequence ID" value="NM_020200.7"/>
</dbReference>
<dbReference type="PDB" id="2JBH">
    <property type="method" value="X-ray"/>
    <property type="resolution" value="1.70 A"/>
    <property type="chains" value="A/B=1-225"/>
</dbReference>
<dbReference type="PDBsum" id="2JBH"/>
<dbReference type="SMR" id="Q9NRG1"/>
<dbReference type="BioGRID" id="121276">
    <property type="interactions" value="40"/>
</dbReference>
<dbReference type="FunCoup" id="Q9NRG1">
    <property type="interactions" value="441"/>
</dbReference>
<dbReference type="IntAct" id="Q9NRG1">
    <property type="interactions" value="34"/>
</dbReference>
<dbReference type="MINT" id="Q9NRG1"/>
<dbReference type="STRING" id="9606.ENSP00000318602"/>
<dbReference type="iPTMnet" id="Q9NRG1"/>
<dbReference type="PhosphoSitePlus" id="Q9NRG1"/>
<dbReference type="BioMuta" id="PRTFDC1"/>
<dbReference type="DMDM" id="74752920"/>
<dbReference type="jPOST" id="Q9NRG1"/>
<dbReference type="MassIVE" id="Q9NRG1"/>
<dbReference type="PaxDb" id="9606-ENSP00000318602"/>
<dbReference type="PeptideAtlas" id="Q9NRG1"/>
<dbReference type="ProteomicsDB" id="82352">
    <molecule id="Q9NRG1-1"/>
</dbReference>
<dbReference type="ProteomicsDB" id="82353">
    <molecule id="Q9NRG1-2"/>
</dbReference>
<dbReference type="ProteomicsDB" id="82354">
    <molecule id="Q9NRG1-3"/>
</dbReference>
<dbReference type="Pumba" id="Q9NRG1"/>
<dbReference type="Antibodypedia" id="12431">
    <property type="antibodies" value="258 antibodies from 31 providers"/>
</dbReference>
<dbReference type="DNASU" id="56952"/>
<dbReference type="Ensembl" id="ENST00000320152.11">
    <molecule id="Q9NRG1-1"/>
    <property type="protein sequence ID" value="ENSP00000318602.5"/>
    <property type="gene ID" value="ENSG00000099256.19"/>
</dbReference>
<dbReference type="Ensembl" id="ENST00000376376.3">
    <molecule id="Q9NRG1-3"/>
    <property type="protein sequence ID" value="ENSP00000365556.3"/>
    <property type="gene ID" value="ENSG00000099256.19"/>
</dbReference>
<dbReference type="Ensembl" id="ENST00000376378.5">
    <molecule id="Q9NRG1-2"/>
    <property type="protein sequence ID" value="ENSP00000365558.1"/>
    <property type="gene ID" value="ENSG00000099256.19"/>
</dbReference>
<dbReference type="GeneID" id="56952"/>
<dbReference type="KEGG" id="hsa:56952"/>
<dbReference type="MANE-Select" id="ENST00000320152.11">
    <property type="protein sequence ID" value="ENSP00000318602.5"/>
    <property type="RefSeq nucleotide sequence ID" value="NM_020200.7"/>
    <property type="RefSeq protein sequence ID" value="NP_064585.1"/>
</dbReference>
<dbReference type="UCSC" id="uc001ise.3">
    <molecule id="Q9NRG1-1"/>
    <property type="organism name" value="human"/>
</dbReference>
<dbReference type="AGR" id="HGNC:23333"/>
<dbReference type="CTD" id="56952"/>
<dbReference type="DisGeNET" id="56952"/>
<dbReference type="GeneCards" id="PRTFDC1"/>
<dbReference type="HGNC" id="HGNC:23333">
    <property type="gene designation" value="PRTFDC1"/>
</dbReference>
<dbReference type="HPA" id="ENSG00000099256">
    <property type="expression patterns" value="Low tissue specificity"/>
</dbReference>
<dbReference type="MIM" id="610751">
    <property type="type" value="gene"/>
</dbReference>
<dbReference type="neXtProt" id="NX_Q9NRG1"/>
<dbReference type="OpenTargets" id="ENSG00000099256"/>
<dbReference type="PharmGKB" id="PA134888009"/>
<dbReference type="VEuPathDB" id="HostDB:ENSG00000099256"/>
<dbReference type="eggNOG" id="KOG3367">
    <property type="taxonomic scope" value="Eukaryota"/>
</dbReference>
<dbReference type="GeneTree" id="ENSGT00940000162225"/>
<dbReference type="HOGENOM" id="CLU_073615_3_0_1"/>
<dbReference type="InParanoid" id="Q9NRG1"/>
<dbReference type="OMA" id="VIFMEDI"/>
<dbReference type="OrthoDB" id="9449045at2759"/>
<dbReference type="PAN-GO" id="Q9NRG1">
    <property type="GO annotations" value="1 GO annotation based on evolutionary models"/>
</dbReference>
<dbReference type="PhylomeDB" id="Q9NRG1"/>
<dbReference type="TreeFam" id="TF313367"/>
<dbReference type="PathwayCommons" id="Q9NRG1"/>
<dbReference type="SignaLink" id="Q9NRG1"/>
<dbReference type="BioGRID-ORCS" id="56952">
    <property type="hits" value="6 hits in 1150 CRISPR screens"/>
</dbReference>
<dbReference type="ChiTaRS" id="PRTFDC1">
    <property type="organism name" value="human"/>
</dbReference>
<dbReference type="EvolutionaryTrace" id="Q9NRG1"/>
<dbReference type="GenomeRNAi" id="56952"/>
<dbReference type="Pharos" id="Q9NRG1">
    <property type="development level" value="Tbio"/>
</dbReference>
<dbReference type="PRO" id="PR:Q9NRG1"/>
<dbReference type="Proteomes" id="UP000005640">
    <property type="component" value="Chromosome 10"/>
</dbReference>
<dbReference type="RNAct" id="Q9NRG1">
    <property type="molecule type" value="protein"/>
</dbReference>
<dbReference type="Bgee" id="ENSG00000099256">
    <property type="expression patterns" value="Expressed in corpus callosum and 174 other cell types or tissues"/>
</dbReference>
<dbReference type="GO" id="GO:0005829">
    <property type="term" value="C:cytosol"/>
    <property type="evidence" value="ECO:0000318"/>
    <property type="project" value="GO_Central"/>
</dbReference>
<dbReference type="GO" id="GO:0000287">
    <property type="term" value="F:magnesium ion binding"/>
    <property type="evidence" value="ECO:0000304"/>
    <property type="project" value="UniProtKB"/>
</dbReference>
<dbReference type="GO" id="GO:0000166">
    <property type="term" value="F:nucleotide binding"/>
    <property type="evidence" value="ECO:0007669"/>
    <property type="project" value="UniProtKB-KW"/>
</dbReference>
<dbReference type="GO" id="GO:0042803">
    <property type="term" value="F:protein homodimerization activity"/>
    <property type="evidence" value="ECO:0000353"/>
    <property type="project" value="UniProtKB"/>
</dbReference>
<dbReference type="GO" id="GO:0006166">
    <property type="term" value="P:purine ribonucleoside salvage"/>
    <property type="evidence" value="ECO:0007669"/>
    <property type="project" value="InterPro"/>
</dbReference>
<dbReference type="CDD" id="cd06223">
    <property type="entry name" value="PRTases_typeI"/>
    <property type="match status" value="1"/>
</dbReference>
<dbReference type="FunFam" id="3.40.50.2020:FF:000038">
    <property type="entry name" value="Hypoxanthine phosphoribosyltransferase"/>
    <property type="match status" value="1"/>
</dbReference>
<dbReference type="Gene3D" id="3.40.50.2020">
    <property type="match status" value="1"/>
</dbReference>
<dbReference type="InterPro" id="IPR050408">
    <property type="entry name" value="HGPRT"/>
</dbReference>
<dbReference type="InterPro" id="IPR005904">
    <property type="entry name" value="Hxn_phspho_trans"/>
</dbReference>
<dbReference type="InterPro" id="IPR000836">
    <property type="entry name" value="PRibTrfase_dom"/>
</dbReference>
<dbReference type="InterPro" id="IPR029057">
    <property type="entry name" value="PRTase-like"/>
</dbReference>
<dbReference type="NCBIfam" id="TIGR01203">
    <property type="entry name" value="HGPRTase"/>
    <property type="match status" value="1"/>
</dbReference>
<dbReference type="PANTHER" id="PTHR43340">
    <property type="entry name" value="HYPOXANTHINE-GUANINE PHOSPHORIBOSYLTRANSFERASE"/>
    <property type="match status" value="1"/>
</dbReference>
<dbReference type="PANTHER" id="PTHR43340:SF5">
    <property type="entry name" value="PHOSPHORIBOSYLTRANSFERASE DOMAIN-CONTAINING PROTEIN 1"/>
    <property type="match status" value="1"/>
</dbReference>
<dbReference type="Pfam" id="PF00156">
    <property type="entry name" value="Pribosyltran"/>
    <property type="match status" value="1"/>
</dbReference>
<dbReference type="SUPFAM" id="SSF53271">
    <property type="entry name" value="PRTase-like"/>
    <property type="match status" value="1"/>
</dbReference>
<feature type="initiator methionine" description="Removed" evidence="4 5">
    <location>
        <position position="1"/>
    </location>
</feature>
<feature type="chain" id="PRO_0000318176" description="Phosphoribosyltransferase domain-containing protein 1">
    <location>
        <begin position="2"/>
        <end position="225"/>
    </location>
</feature>
<feature type="binding site" evidence="1">
    <location>
        <begin position="141"/>
        <end position="149"/>
    </location>
    <ligand>
        <name>GMP</name>
        <dbReference type="ChEBI" id="CHEBI:58115"/>
    </ligand>
</feature>
<feature type="binding site" evidence="3">
    <location>
        <position position="141"/>
    </location>
    <ligand>
        <name>Mg(2+)</name>
        <dbReference type="ChEBI" id="CHEBI:18420"/>
    </ligand>
</feature>
<feature type="binding site" evidence="3">
    <location>
        <position position="142"/>
    </location>
    <ligand>
        <name>Mg(2+)</name>
        <dbReference type="ChEBI" id="CHEBI:18420"/>
    </ligand>
</feature>
<feature type="binding site" evidence="1">
    <location>
        <position position="173"/>
    </location>
    <ligand>
        <name>GMP</name>
        <dbReference type="ChEBI" id="CHEBI:58115"/>
    </ligand>
</feature>
<feature type="binding site" evidence="1">
    <location>
        <begin position="194"/>
        <end position="195"/>
    </location>
    <ligand>
        <name>GMP</name>
        <dbReference type="ChEBI" id="CHEBI:58115"/>
    </ligand>
</feature>
<feature type="binding site" evidence="1">
    <location>
        <position position="201"/>
    </location>
    <ligand>
        <name>GMP</name>
        <dbReference type="ChEBI" id="CHEBI:58115"/>
    </ligand>
</feature>
<feature type="binding site" evidence="3">
    <location>
        <position position="201"/>
    </location>
    <ligand>
        <name>Mg(2+)</name>
        <dbReference type="ChEBI" id="CHEBI:18420"/>
    </ligand>
</feature>
<feature type="modified residue" description="N-acetylalanine" evidence="4 5">
    <location>
        <position position="2"/>
    </location>
</feature>
<feature type="splice variant" id="VSP_031179" description="In isoform 3." evidence="3">
    <original>NDQSMGEMQIIGGDDLSTLAGKNVLIVEDVVGTGRTMKALLSNIEKYKPNMIKVASLLVKRTSRSDGFRPDYAGFEIPNLFVVGYALDYNEYFRDLNHICVINEHGKEKYRV</original>
    <variation>LRARLKRTTICDRGGLAFSQGYMSSCAPLQESPNTLWRGYLQVLIPCFHIRFQLPRSEQN</variation>
    <location>
        <begin position="114"/>
        <end position="225"/>
    </location>
</feature>
<feature type="splice variant" id="VSP_031180" description="In isoform 2." evidence="2">
    <original>YAGFEIPNLFVVGYALDYNEYFRDLNHICVINEHGKEKYRV</original>
    <variation>SHMRHQ</variation>
    <location>
        <begin position="185"/>
        <end position="225"/>
    </location>
</feature>
<feature type="sequence conflict" description="In Ref. 3; BAD93029." evidence="3" ref="3">
    <original>L</original>
    <variation>W</variation>
    <location>
        <position position="39"/>
    </location>
</feature>
<feature type="sequence conflict" description="In Ref. 3; BAD96394." evidence="3" ref="3">
    <original>G</original>
    <variation>R</variation>
    <location>
        <position position="65"/>
    </location>
</feature>
<feature type="helix" evidence="6">
    <location>
        <begin position="11"/>
        <end position="13"/>
    </location>
</feature>
<feature type="helix" evidence="6">
    <location>
        <begin position="26"/>
        <end position="28"/>
    </location>
</feature>
<feature type="helix" evidence="6">
    <location>
        <begin position="33"/>
        <end position="35"/>
    </location>
</feature>
<feature type="strand" evidence="6">
    <location>
        <begin position="38"/>
        <end position="44"/>
    </location>
</feature>
<feature type="helix" evidence="6">
    <location>
        <begin position="46"/>
        <end position="64"/>
    </location>
</feature>
<feature type="strand" evidence="6">
    <location>
        <begin position="69"/>
        <end position="75"/>
    </location>
</feature>
<feature type="turn" evidence="6">
    <location>
        <begin position="76"/>
        <end position="78"/>
    </location>
</feature>
<feature type="helix" evidence="6">
    <location>
        <begin position="79"/>
        <end position="95"/>
    </location>
</feature>
<feature type="strand" evidence="6">
    <location>
        <begin position="102"/>
        <end position="109"/>
    </location>
</feature>
<feature type="strand" evidence="6">
    <location>
        <begin position="111"/>
        <end position="113"/>
    </location>
</feature>
<feature type="strand" evidence="6">
    <location>
        <begin position="123"/>
        <end position="127"/>
    </location>
</feature>
<feature type="helix" evidence="6">
    <location>
        <begin position="129"/>
        <end position="132"/>
    </location>
</feature>
<feature type="strand" evidence="6">
    <location>
        <begin position="135"/>
        <end position="147"/>
    </location>
</feature>
<feature type="helix" evidence="6">
    <location>
        <begin position="148"/>
        <end position="158"/>
    </location>
</feature>
<feature type="strand" evidence="6">
    <location>
        <begin position="163"/>
        <end position="173"/>
    </location>
</feature>
<feature type="strand" evidence="6">
    <location>
        <begin position="184"/>
        <end position="190"/>
    </location>
</feature>
<feature type="strand" evidence="6">
    <location>
        <begin position="210"/>
        <end position="215"/>
    </location>
</feature>
<feature type="helix" evidence="6">
    <location>
        <begin position="217"/>
        <end position="222"/>
    </location>
</feature>
<keyword id="KW-0002">3D-structure</keyword>
<keyword id="KW-0007">Acetylation</keyword>
<keyword id="KW-0025">Alternative splicing</keyword>
<keyword id="KW-0460">Magnesium</keyword>
<keyword id="KW-0479">Metal-binding</keyword>
<keyword id="KW-0547">Nucleotide-binding</keyword>
<keyword id="KW-1267">Proteomics identification</keyword>
<keyword id="KW-1185">Reference proteome</keyword>
<sequence>MAGSSEEAPDYGRGVVIMDDWPGYDLNLFTYPQHYYGDLEYVLIPHGIIVDRIERLAKDIMKDIGYSDIMVLCVLKGGYKFCADLVEHLKNISRNSDRFVSMKVDFIRLKSYRNDQSMGEMQIIGGDDLSTLAGKNVLIVEDVVGTGRTMKALLSNIEKYKPNMIKVASLLVKRTSRSDGFRPDYAGFEIPNLFVVGYALDYNEYFRDLNHICVINEHGKEKYRV</sequence>
<protein>
    <recommendedName>
        <fullName>Phosphoribosyltransferase domain-containing protein 1</fullName>
    </recommendedName>
</protein>
<accession>Q9NRG1</accession>
<accession>B7Z1Z3</accession>
<accession>Q53HA7</accession>
<accession>Q59EL9</accession>
<accession>Q5VV18</accession>
<accession>Q5VV20</accession>
<organism>
    <name type="scientific">Homo sapiens</name>
    <name type="common">Human</name>
    <dbReference type="NCBI Taxonomy" id="9606"/>
    <lineage>
        <taxon>Eukaryota</taxon>
        <taxon>Metazoa</taxon>
        <taxon>Chordata</taxon>
        <taxon>Craniata</taxon>
        <taxon>Vertebrata</taxon>
        <taxon>Euteleostomi</taxon>
        <taxon>Mammalia</taxon>
        <taxon>Eutheria</taxon>
        <taxon>Euarchontoglires</taxon>
        <taxon>Primates</taxon>
        <taxon>Haplorrhini</taxon>
        <taxon>Catarrhini</taxon>
        <taxon>Hominidae</taxon>
        <taxon>Homo</taxon>
    </lineage>
</organism>